<keyword id="KW-0456">Lyase</keyword>
<keyword id="KW-0496">Mitochondrion</keyword>
<keyword id="KW-1185">Reference proteome</keyword>
<accession>Q0C8L3</accession>
<feature type="chain" id="PRO_0000422960" description="Cis-aconitate decarboxylase">
    <location>
        <begin position="1"/>
        <end position="490"/>
    </location>
</feature>
<dbReference type="EC" id="4.1.1.6" evidence="2 3"/>
<dbReference type="EMBL" id="CH476609">
    <property type="protein sequence ID" value="EAU29420.1"/>
    <property type="molecule type" value="Genomic_DNA"/>
</dbReference>
<dbReference type="RefSeq" id="XP_001209273.1">
    <property type="nucleotide sequence ID" value="XM_001209273.1"/>
</dbReference>
<dbReference type="SMR" id="Q0C8L3"/>
<dbReference type="STRING" id="341663.Q0C8L3"/>
<dbReference type="EnsemblFungi" id="EAU29420">
    <property type="protein sequence ID" value="EAU29420"/>
    <property type="gene ID" value="ATEG_09971"/>
</dbReference>
<dbReference type="GeneID" id="4319646"/>
<dbReference type="VEuPathDB" id="FungiDB:ATEG_09971"/>
<dbReference type="eggNOG" id="ENOG502QVEB">
    <property type="taxonomic scope" value="Eukaryota"/>
</dbReference>
<dbReference type="HOGENOM" id="CLU_026574_1_1_1"/>
<dbReference type="OMA" id="INPGHRQ"/>
<dbReference type="OrthoDB" id="10267976at2759"/>
<dbReference type="Proteomes" id="UP000007963">
    <property type="component" value="Unassembled WGS sequence"/>
</dbReference>
<dbReference type="GO" id="GO:0005739">
    <property type="term" value="C:mitochondrion"/>
    <property type="evidence" value="ECO:0007669"/>
    <property type="project" value="UniProtKB-SubCell"/>
</dbReference>
<dbReference type="GO" id="GO:0047613">
    <property type="term" value="F:aconitate decarboxylase activity"/>
    <property type="evidence" value="ECO:0000314"/>
    <property type="project" value="UniProtKB"/>
</dbReference>
<dbReference type="GO" id="GO:0042803">
    <property type="term" value="F:protein homodimerization activity"/>
    <property type="evidence" value="ECO:0000314"/>
    <property type="project" value="UniProtKB"/>
</dbReference>
<dbReference type="Gene3D" id="1.10.4100.10">
    <property type="entry name" value="2-methylcitrate dehydratase PrpD"/>
    <property type="match status" value="1"/>
</dbReference>
<dbReference type="Gene3D" id="3.30.1330.120">
    <property type="entry name" value="2-methylcitrate dehydratase PrpD"/>
    <property type="match status" value="1"/>
</dbReference>
<dbReference type="InterPro" id="IPR036148">
    <property type="entry name" value="MmgE/PrpD_sf"/>
</dbReference>
<dbReference type="InterPro" id="IPR042183">
    <property type="entry name" value="MmgE/PrpD_sf_1"/>
</dbReference>
<dbReference type="InterPro" id="IPR042188">
    <property type="entry name" value="MmgE/PrpD_sf_2"/>
</dbReference>
<dbReference type="InterPro" id="IPR005656">
    <property type="entry name" value="MmgE_PrpD"/>
</dbReference>
<dbReference type="InterPro" id="IPR045337">
    <property type="entry name" value="MmgE_PrpD_C"/>
</dbReference>
<dbReference type="InterPro" id="IPR045336">
    <property type="entry name" value="MmgE_PrpD_N"/>
</dbReference>
<dbReference type="PANTHER" id="PTHR16943:SF8">
    <property type="entry name" value="2-METHYLCITRATE DEHYDRATASE"/>
    <property type="match status" value="1"/>
</dbReference>
<dbReference type="PANTHER" id="PTHR16943">
    <property type="entry name" value="2-METHYLCITRATE DEHYDRATASE-RELATED"/>
    <property type="match status" value="1"/>
</dbReference>
<dbReference type="Pfam" id="PF19305">
    <property type="entry name" value="MmgE_PrpD_C"/>
    <property type="match status" value="1"/>
</dbReference>
<dbReference type="Pfam" id="PF03972">
    <property type="entry name" value="MmgE_PrpD_N"/>
    <property type="match status" value="1"/>
</dbReference>
<dbReference type="SUPFAM" id="SSF103378">
    <property type="entry name" value="2-methylcitrate dehydratase PrpD"/>
    <property type="match status" value="1"/>
</dbReference>
<reference key="1">
    <citation type="submission" date="2005-09" db="EMBL/GenBank/DDBJ databases">
        <title>Annotation of the Aspergillus terreus NIH2624 genome.</title>
        <authorList>
            <person name="Birren B.W."/>
            <person name="Lander E.S."/>
            <person name="Galagan J.E."/>
            <person name="Nusbaum C."/>
            <person name="Devon K."/>
            <person name="Henn M."/>
            <person name="Ma L.-J."/>
            <person name="Jaffe D.B."/>
            <person name="Butler J."/>
            <person name="Alvarez P."/>
            <person name="Gnerre S."/>
            <person name="Grabherr M."/>
            <person name="Kleber M."/>
            <person name="Mauceli E.W."/>
            <person name="Brockman W."/>
            <person name="Rounsley S."/>
            <person name="Young S.K."/>
            <person name="LaButti K."/>
            <person name="Pushparaj V."/>
            <person name="DeCaprio D."/>
            <person name="Crawford M."/>
            <person name="Koehrsen M."/>
            <person name="Engels R."/>
            <person name="Montgomery P."/>
            <person name="Pearson M."/>
            <person name="Howarth C."/>
            <person name="Larson L."/>
            <person name="Luoma S."/>
            <person name="White J."/>
            <person name="Alvarado L."/>
            <person name="Kodira C.D."/>
            <person name="Zeng Q."/>
            <person name="Oleary S."/>
            <person name="Yandava C."/>
            <person name="Denning D.W."/>
            <person name="Nierman W.C."/>
            <person name="Milne T."/>
            <person name="Madden K."/>
        </authorList>
    </citation>
    <scope>NUCLEOTIDE SEQUENCE [LARGE SCALE GENOMIC DNA]</scope>
    <source>
        <strain>NIH 2624 / FGSC A1156</strain>
    </source>
</reference>
<reference key="2">
    <citation type="journal article" date="2008" name="Appl. Microbiol. Biotechnol.">
        <title>Cloning and functional characterization of the cis-aconitic acid decarboxylase (CAD) gene from Aspergillus terreus.</title>
        <authorList>
            <person name="Kanamasa S."/>
            <person name="Dwiarti L."/>
            <person name="Okabe M."/>
            <person name="Park E.Y."/>
        </authorList>
    </citation>
    <scope>FUNCTION</scope>
    <scope>CATALYTIC ACTIVITY</scope>
</reference>
<reference key="3">
    <citation type="journal article" date="2019" name="Proc. Natl. Acad. Sci. U.S.A.">
        <title>Crystal structure of cis-aconitate decarboxylase reveals the impact of naturally occurring human mutations on itaconate synthesis.</title>
        <authorList>
            <person name="Chen F."/>
            <person name="Lukat P."/>
            <person name="Iqbal A.A."/>
            <person name="Saile K."/>
            <person name="Kaever V."/>
            <person name="van den Heuvel J."/>
            <person name="Blankenfeldt W."/>
            <person name="Buessow K."/>
            <person name="Pessler F."/>
        </authorList>
    </citation>
    <scope>FUNCTION</scope>
    <scope>CATALYTIC ACTIVITY</scope>
    <scope>BIOPHYSICOCHEMICAL PROPERTIES</scope>
    <scope>SUBUNIT</scope>
</reference>
<organism>
    <name type="scientific">Aspergillus terreus (strain NIH 2624 / FGSC A1156)</name>
    <dbReference type="NCBI Taxonomy" id="341663"/>
    <lineage>
        <taxon>Eukaryota</taxon>
        <taxon>Fungi</taxon>
        <taxon>Dikarya</taxon>
        <taxon>Ascomycota</taxon>
        <taxon>Pezizomycotina</taxon>
        <taxon>Eurotiomycetes</taxon>
        <taxon>Eurotiomycetidae</taxon>
        <taxon>Eurotiales</taxon>
        <taxon>Aspergillaceae</taxon>
        <taxon>Aspergillus</taxon>
        <taxon>Aspergillus subgen. Circumdati</taxon>
    </lineage>
</organism>
<comment type="function">
    <text evidence="2 3">Involved in the production of itaconic acid, a soluble unsaturated dicarboxylic acid mainly produced from sugars.</text>
</comment>
<comment type="catalytic activity">
    <reaction evidence="2 3">
        <text>cis-aconitate + H(+) = itaconate + CO2</text>
        <dbReference type="Rhea" id="RHEA:15253"/>
        <dbReference type="ChEBI" id="CHEBI:15378"/>
        <dbReference type="ChEBI" id="CHEBI:16383"/>
        <dbReference type="ChEBI" id="CHEBI:16526"/>
        <dbReference type="ChEBI" id="CHEBI:17240"/>
        <dbReference type="EC" id="4.1.1.6"/>
    </reaction>
    <physiologicalReaction direction="left-to-right" evidence="2 3">
        <dbReference type="Rhea" id="RHEA:15254"/>
    </physiologicalReaction>
</comment>
<comment type="biophysicochemical properties">
    <kinetics>
        <KM evidence="3">9 mM for cis-aconitate</KM>
        <text evidence="3">kcat is 18.4 sec(-1) for cis-aconitate.</text>
    </kinetics>
    <phDependence>
        <text evidence="3">Optimum pH is 6.0.</text>
    </phDependence>
</comment>
<comment type="subunit">
    <text evidence="3">Homodimer.</text>
</comment>
<comment type="subcellular location">
    <subcellularLocation>
        <location evidence="1">Mitochondrion</location>
    </subcellularLocation>
</comment>
<comment type="biotechnology">
    <text evidence="2">A.terreus has been used for the industrial production of itaconic acid because of its high production rate (PubMed:18584171). Itaconic acid is used as a monomer to form polymers that are widely used as raw materials for latex, synthetic resins, adhesives, paint, and additives for acrylic resin fibers and paper (PubMed:18584171). It is also used as an acidulant and for the pH adjustment of foods (PubMed:18584171).</text>
</comment>
<comment type="similarity">
    <text evidence="5">Belongs to the PrpD family.</text>
</comment>
<comment type="online information" name="Protein Spotlight">
    <link uri="https://www.proteinspotlight.org/back_issues/249/"/>
    <text>Unnatural stuff thank you - Issue 249 of July 2022</text>
</comment>
<name>CAD_ASPTN</name>
<proteinExistence type="evidence at protein level"/>
<sequence length="490" mass="52950">MTKQSADSNAKSGVTAEICHWASNLATDDIPSDVLERAKYLILDGIACAWVGARVPWSEKYVQATMSFEPPGACRVIGYGQKLGPVAAAMTNSAFIQATELDDYHSEAPLHSASIVLPAVFAASEVLAEQGKTISGIDVILAAIVGFESGPRIGKAIYGSDLLNNGWHCGAVYGAPAGALATGKLLGLTPDSMEDALGIACTQACGLMSAQYGGMVKRVQHGFAARNGLLGGLLAYGGYEAMKGVLERSYGGFLKMFTKGNGREPPYKEEEVVAGLGSFWHTFTIRIKLYACCGLVHGPVEAIEKLQRRYPELLNRANLSNIRHVYVQLSTASNSHCGWIPEERPISSIAGQMSVAYILAVQLVDQQCLLAQFSEFDDNLERPEVWDLARKVTPSHSEEFDQDGNCLSAGRVRIEFNDGSSVTETVEKPLGVKEPMPNERILHKYRTLAGSVTDESRVKEIEDLVLSLDRLTDITPLLELLNCPVKSPLV</sequence>
<protein>
    <recommendedName>
        <fullName>Cis-aconitate decarboxylase</fullName>
        <shortName>CAD</shortName>
        <shortName evidence="4">aCAD</shortName>
        <ecNumber evidence="2 3">4.1.1.6</ecNumber>
    </recommendedName>
    <alternativeName>
        <fullName>Aconitate decarboxylase</fullName>
    </alternativeName>
    <alternativeName>
        <fullName>Cis-aconitic acid decarboxylase</fullName>
    </alternativeName>
</protein>
<evidence type="ECO:0000250" key="1">
    <source>
        <dbReference type="UniProtKB" id="P54987"/>
    </source>
</evidence>
<evidence type="ECO:0000269" key="2">
    <source>
    </source>
</evidence>
<evidence type="ECO:0000269" key="3">
    <source>
    </source>
</evidence>
<evidence type="ECO:0000303" key="4">
    <source>
    </source>
</evidence>
<evidence type="ECO:0000305" key="5"/>
<gene>
    <name type="primary">cad1</name>
    <name type="ORF">ATEG_09971</name>
</gene>